<evidence type="ECO:0000255" key="1">
    <source>
        <dbReference type="HAMAP-Rule" id="MF_00109"/>
    </source>
</evidence>
<organism>
    <name type="scientific">Leptospira biflexa serovar Patoc (strain Patoc 1 / ATCC 23582 / Paris)</name>
    <dbReference type="NCBI Taxonomy" id="456481"/>
    <lineage>
        <taxon>Bacteria</taxon>
        <taxon>Pseudomonadati</taxon>
        <taxon>Spirochaetota</taxon>
        <taxon>Spirochaetia</taxon>
        <taxon>Leptospirales</taxon>
        <taxon>Leptospiraceae</taxon>
        <taxon>Leptospira</taxon>
    </lineage>
</organism>
<dbReference type="EC" id="2.7.1.71" evidence="1"/>
<dbReference type="EMBL" id="CP000787">
    <property type="protein sequence ID" value="ABZ99610.1"/>
    <property type="molecule type" value="Genomic_DNA"/>
</dbReference>
<dbReference type="RefSeq" id="WP_012476548.1">
    <property type="nucleotide sequence ID" value="NC_010843.1"/>
</dbReference>
<dbReference type="SMR" id="B0STS6"/>
<dbReference type="STRING" id="456481.LEPBI_II0072"/>
<dbReference type="KEGG" id="lbi:LEPBI_II0072"/>
<dbReference type="HOGENOM" id="CLU_057607_4_1_12"/>
<dbReference type="UniPathway" id="UPA00053">
    <property type="reaction ID" value="UER00088"/>
</dbReference>
<dbReference type="Proteomes" id="UP000001847">
    <property type="component" value="Chromosome II"/>
</dbReference>
<dbReference type="GO" id="GO:0005829">
    <property type="term" value="C:cytosol"/>
    <property type="evidence" value="ECO:0007669"/>
    <property type="project" value="TreeGrafter"/>
</dbReference>
<dbReference type="GO" id="GO:0005524">
    <property type="term" value="F:ATP binding"/>
    <property type="evidence" value="ECO:0007669"/>
    <property type="project" value="UniProtKB-UniRule"/>
</dbReference>
<dbReference type="GO" id="GO:0000287">
    <property type="term" value="F:magnesium ion binding"/>
    <property type="evidence" value="ECO:0007669"/>
    <property type="project" value="UniProtKB-UniRule"/>
</dbReference>
<dbReference type="GO" id="GO:0004765">
    <property type="term" value="F:shikimate kinase activity"/>
    <property type="evidence" value="ECO:0007669"/>
    <property type="project" value="UniProtKB-UniRule"/>
</dbReference>
<dbReference type="GO" id="GO:0008652">
    <property type="term" value="P:amino acid biosynthetic process"/>
    <property type="evidence" value="ECO:0007669"/>
    <property type="project" value="UniProtKB-KW"/>
</dbReference>
<dbReference type="GO" id="GO:0009073">
    <property type="term" value="P:aromatic amino acid family biosynthetic process"/>
    <property type="evidence" value="ECO:0007669"/>
    <property type="project" value="UniProtKB-KW"/>
</dbReference>
<dbReference type="GO" id="GO:0009423">
    <property type="term" value="P:chorismate biosynthetic process"/>
    <property type="evidence" value="ECO:0007669"/>
    <property type="project" value="UniProtKB-UniRule"/>
</dbReference>
<dbReference type="CDD" id="cd00464">
    <property type="entry name" value="SK"/>
    <property type="match status" value="1"/>
</dbReference>
<dbReference type="Gene3D" id="3.40.50.300">
    <property type="entry name" value="P-loop containing nucleotide triphosphate hydrolases"/>
    <property type="match status" value="1"/>
</dbReference>
<dbReference type="HAMAP" id="MF_00109">
    <property type="entry name" value="Shikimate_kinase"/>
    <property type="match status" value="1"/>
</dbReference>
<dbReference type="InterPro" id="IPR027417">
    <property type="entry name" value="P-loop_NTPase"/>
</dbReference>
<dbReference type="InterPro" id="IPR031322">
    <property type="entry name" value="Shikimate/glucono_kinase"/>
</dbReference>
<dbReference type="InterPro" id="IPR000623">
    <property type="entry name" value="Shikimate_kinase/TSH1"/>
</dbReference>
<dbReference type="PANTHER" id="PTHR21087">
    <property type="entry name" value="SHIKIMATE KINASE"/>
    <property type="match status" value="1"/>
</dbReference>
<dbReference type="PANTHER" id="PTHR21087:SF16">
    <property type="entry name" value="SHIKIMATE KINASE 1, CHLOROPLASTIC"/>
    <property type="match status" value="1"/>
</dbReference>
<dbReference type="Pfam" id="PF01202">
    <property type="entry name" value="SKI"/>
    <property type="match status" value="1"/>
</dbReference>
<dbReference type="PRINTS" id="PR01100">
    <property type="entry name" value="SHIKIMTKNASE"/>
</dbReference>
<dbReference type="SUPFAM" id="SSF52540">
    <property type="entry name" value="P-loop containing nucleoside triphosphate hydrolases"/>
    <property type="match status" value="1"/>
</dbReference>
<protein>
    <recommendedName>
        <fullName evidence="1">Shikimate kinase</fullName>
        <shortName evidence="1">SK</shortName>
        <ecNumber evidence="1">2.7.1.71</ecNumber>
    </recommendedName>
</protein>
<keyword id="KW-0028">Amino-acid biosynthesis</keyword>
<keyword id="KW-0057">Aromatic amino acid biosynthesis</keyword>
<keyword id="KW-0067">ATP-binding</keyword>
<keyword id="KW-0963">Cytoplasm</keyword>
<keyword id="KW-0418">Kinase</keyword>
<keyword id="KW-0460">Magnesium</keyword>
<keyword id="KW-0479">Metal-binding</keyword>
<keyword id="KW-0547">Nucleotide-binding</keyword>
<keyword id="KW-1185">Reference proteome</keyword>
<keyword id="KW-0808">Transferase</keyword>
<proteinExistence type="inferred from homology"/>
<name>AROK_LEPBP</name>
<feature type="chain" id="PRO_1000094396" description="Shikimate kinase">
    <location>
        <begin position="1"/>
        <end position="181"/>
    </location>
</feature>
<feature type="binding site" evidence="1">
    <location>
        <begin position="11"/>
        <end position="16"/>
    </location>
    <ligand>
        <name>ATP</name>
        <dbReference type="ChEBI" id="CHEBI:30616"/>
    </ligand>
</feature>
<feature type="binding site" evidence="1">
    <location>
        <position position="15"/>
    </location>
    <ligand>
        <name>Mg(2+)</name>
        <dbReference type="ChEBI" id="CHEBI:18420"/>
    </ligand>
</feature>
<feature type="binding site" evidence="1">
    <location>
        <position position="33"/>
    </location>
    <ligand>
        <name>substrate</name>
    </ligand>
</feature>
<feature type="binding site" evidence="1">
    <location>
        <position position="58"/>
    </location>
    <ligand>
        <name>substrate</name>
    </ligand>
</feature>
<feature type="binding site" evidence="1">
    <location>
        <position position="80"/>
    </location>
    <ligand>
        <name>substrate</name>
    </ligand>
</feature>
<feature type="binding site" evidence="1">
    <location>
        <position position="128"/>
    </location>
    <ligand>
        <name>ATP</name>
        <dbReference type="ChEBI" id="CHEBI:30616"/>
    </ligand>
</feature>
<feature type="binding site" evidence="1">
    <location>
        <position position="144"/>
    </location>
    <ligand>
        <name>substrate</name>
    </ligand>
</feature>
<comment type="function">
    <text evidence="1">Catalyzes the specific phosphorylation of the 3-hydroxyl group of shikimic acid using ATP as a cosubstrate.</text>
</comment>
<comment type="catalytic activity">
    <reaction evidence="1">
        <text>shikimate + ATP = 3-phosphoshikimate + ADP + H(+)</text>
        <dbReference type="Rhea" id="RHEA:13121"/>
        <dbReference type="ChEBI" id="CHEBI:15378"/>
        <dbReference type="ChEBI" id="CHEBI:30616"/>
        <dbReference type="ChEBI" id="CHEBI:36208"/>
        <dbReference type="ChEBI" id="CHEBI:145989"/>
        <dbReference type="ChEBI" id="CHEBI:456216"/>
        <dbReference type="EC" id="2.7.1.71"/>
    </reaction>
</comment>
<comment type="cofactor">
    <cofactor evidence="1">
        <name>Mg(2+)</name>
        <dbReference type="ChEBI" id="CHEBI:18420"/>
    </cofactor>
    <text evidence="1">Binds 1 Mg(2+) ion per subunit.</text>
</comment>
<comment type="pathway">
    <text evidence="1">Metabolic intermediate biosynthesis; chorismate biosynthesis; chorismate from D-erythrose 4-phosphate and phosphoenolpyruvate: step 5/7.</text>
</comment>
<comment type="subunit">
    <text evidence="1">Monomer.</text>
</comment>
<comment type="subcellular location">
    <subcellularLocation>
        <location evidence="1">Cytoplasm</location>
    </subcellularLocation>
</comment>
<comment type="similarity">
    <text evidence="1">Belongs to the shikimate kinase family.</text>
</comment>
<sequence>MMNIILIGARGAGKSKVSRSLSKQSEIPVVSTDSVAVYETGGIPIPKFVENNGWKAFRELEYSILQKLQNANGIILDCGGGILFDLDESGNEVLSERKLDLLRKIGRIVYLERGIEELVEKVKGDKTRPDLSKITTYRSILEKRLPVYQEAAHFKLNLTKLSKEEAAEKILDWIGIKSKSI</sequence>
<accession>B0STS6</accession>
<gene>
    <name evidence="1" type="primary">aroK</name>
    <name type="ordered locus">LEPBI_II0072</name>
</gene>
<reference key="1">
    <citation type="journal article" date="2008" name="PLoS ONE">
        <title>Genome sequence of the saprophyte Leptospira biflexa provides insights into the evolution of Leptospira and the pathogenesis of leptospirosis.</title>
        <authorList>
            <person name="Picardeau M."/>
            <person name="Bulach D.M."/>
            <person name="Bouchier C."/>
            <person name="Zuerner R.L."/>
            <person name="Zidane N."/>
            <person name="Wilson P.J."/>
            <person name="Creno S."/>
            <person name="Kuczek E.S."/>
            <person name="Bommezzadri S."/>
            <person name="Davis J.C."/>
            <person name="McGrath A."/>
            <person name="Johnson M.J."/>
            <person name="Boursaux-Eude C."/>
            <person name="Seemann T."/>
            <person name="Rouy Z."/>
            <person name="Coppel R.L."/>
            <person name="Rood J.I."/>
            <person name="Lajus A."/>
            <person name="Davies J.K."/>
            <person name="Medigue C."/>
            <person name="Adler B."/>
        </authorList>
    </citation>
    <scope>NUCLEOTIDE SEQUENCE [LARGE SCALE GENOMIC DNA]</scope>
    <source>
        <strain>Patoc 1 / ATCC 23582 / Paris</strain>
    </source>
</reference>